<accession>Q6AXQ2</accession>
<name>EFC11_RAT</name>
<gene>
    <name type="primary">Efcab11</name>
</gene>
<keyword id="KW-0106">Calcium</keyword>
<keyword id="KW-0479">Metal-binding</keyword>
<keyword id="KW-1185">Reference proteome</keyword>
<keyword id="KW-0677">Repeat</keyword>
<evidence type="ECO:0000255" key="1">
    <source>
        <dbReference type="PROSITE-ProRule" id="PRU00448"/>
    </source>
</evidence>
<reference key="1">
    <citation type="journal article" date="2004" name="Genome Res.">
        <title>The status, quality, and expansion of the NIH full-length cDNA project: the Mammalian Gene Collection (MGC).</title>
        <authorList>
            <consortium name="The MGC Project Team"/>
        </authorList>
    </citation>
    <scope>NUCLEOTIDE SEQUENCE [LARGE SCALE MRNA]</scope>
    <source>
        <tissue>Testis</tissue>
    </source>
</reference>
<sequence>MFLSEAGARPRAGEISASERRKWVEVFKACDEDNKGYLSREDFKVAIVMLFGYKPSKIEADAVMSSANPDTSGVSLEGFLNVVQRKKEAQLYRNEIRHIFTAFDVHYRGFLTLEDFKRAFSQVAPKLPSRTVLEVFREADQDSDGHVSFRDFEYAMNHGKAK</sequence>
<feature type="chain" id="PRO_0000286582" description="EF-hand calcium-binding domain-containing protein 11">
    <location>
        <begin position="1"/>
        <end position="162"/>
    </location>
</feature>
<feature type="domain" description="EF-hand 1" evidence="1">
    <location>
        <begin position="18"/>
        <end position="53"/>
    </location>
</feature>
<feature type="domain" description="EF-hand 2" evidence="1">
    <location>
        <begin position="91"/>
        <end position="126"/>
    </location>
</feature>
<feature type="domain" description="EF-hand 3" evidence="1">
    <location>
        <begin position="127"/>
        <end position="162"/>
    </location>
</feature>
<feature type="binding site" evidence="1">
    <location>
        <position position="140"/>
    </location>
    <ligand>
        <name>Ca(2+)</name>
        <dbReference type="ChEBI" id="CHEBI:29108"/>
    </ligand>
</feature>
<feature type="binding site" evidence="1">
    <location>
        <position position="142"/>
    </location>
    <ligand>
        <name>Ca(2+)</name>
        <dbReference type="ChEBI" id="CHEBI:29108"/>
    </ligand>
</feature>
<feature type="binding site" evidence="1">
    <location>
        <position position="144"/>
    </location>
    <ligand>
        <name>Ca(2+)</name>
        <dbReference type="ChEBI" id="CHEBI:29108"/>
    </ligand>
</feature>
<feature type="binding site" evidence="1">
    <location>
        <position position="146"/>
    </location>
    <ligand>
        <name>Ca(2+)</name>
        <dbReference type="ChEBI" id="CHEBI:29108"/>
    </ligand>
</feature>
<feature type="binding site" evidence="1">
    <location>
        <position position="151"/>
    </location>
    <ligand>
        <name>Ca(2+)</name>
        <dbReference type="ChEBI" id="CHEBI:29108"/>
    </ligand>
</feature>
<organism>
    <name type="scientific">Rattus norvegicus</name>
    <name type="common">Rat</name>
    <dbReference type="NCBI Taxonomy" id="10116"/>
    <lineage>
        <taxon>Eukaryota</taxon>
        <taxon>Metazoa</taxon>
        <taxon>Chordata</taxon>
        <taxon>Craniata</taxon>
        <taxon>Vertebrata</taxon>
        <taxon>Euteleostomi</taxon>
        <taxon>Mammalia</taxon>
        <taxon>Eutheria</taxon>
        <taxon>Euarchontoglires</taxon>
        <taxon>Glires</taxon>
        <taxon>Rodentia</taxon>
        <taxon>Myomorpha</taxon>
        <taxon>Muroidea</taxon>
        <taxon>Muridae</taxon>
        <taxon>Murinae</taxon>
        <taxon>Rattus</taxon>
    </lineage>
</organism>
<protein>
    <recommendedName>
        <fullName>EF-hand calcium-binding domain-containing protein 11</fullName>
    </recommendedName>
</protein>
<dbReference type="EMBL" id="BC079408">
    <property type="protein sequence ID" value="AAH79408.1"/>
    <property type="molecule type" value="mRNA"/>
</dbReference>
<dbReference type="RefSeq" id="NP_001019521.1">
    <property type="nucleotide sequence ID" value="NM_001024350.1"/>
</dbReference>
<dbReference type="SMR" id="Q6AXQ2"/>
<dbReference type="BioGRID" id="272013">
    <property type="interactions" value="1"/>
</dbReference>
<dbReference type="FunCoup" id="Q6AXQ2">
    <property type="interactions" value="700"/>
</dbReference>
<dbReference type="STRING" id="10116.ENSRNOP00000069648"/>
<dbReference type="PhosphoSitePlus" id="Q6AXQ2"/>
<dbReference type="PaxDb" id="10116-ENSRNOP00000005082"/>
<dbReference type="DNASU" id="500705"/>
<dbReference type="Ensembl" id="ENSRNOT00000082444.2">
    <property type="protein sequence ID" value="ENSRNOP00000069648.1"/>
    <property type="gene ID" value="ENSRNOG00000053317.2"/>
</dbReference>
<dbReference type="GeneID" id="500705"/>
<dbReference type="KEGG" id="rno:500705"/>
<dbReference type="UCSC" id="RGD:1565006">
    <property type="organism name" value="rat"/>
</dbReference>
<dbReference type="AGR" id="RGD:1565006"/>
<dbReference type="CTD" id="90141"/>
<dbReference type="RGD" id="1565006">
    <property type="gene designation" value="Efcab11"/>
</dbReference>
<dbReference type="eggNOG" id="KOG0027">
    <property type="taxonomic scope" value="Eukaryota"/>
</dbReference>
<dbReference type="GeneTree" id="ENSGT00390000004917"/>
<dbReference type="HOGENOM" id="CLU_114999_0_0_1"/>
<dbReference type="InParanoid" id="Q6AXQ2"/>
<dbReference type="OMA" id="YAMKHGQ"/>
<dbReference type="OrthoDB" id="26525at2759"/>
<dbReference type="PhylomeDB" id="Q6AXQ2"/>
<dbReference type="TreeFam" id="TF329255"/>
<dbReference type="PRO" id="PR:Q6AXQ2"/>
<dbReference type="Proteomes" id="UP000002494">
    <property type="component" value="Chromosome 6"/>
</dbReference>
<dbReference type="Bgee" id="ENSRNOG00000053317">
    <property type="expression patterns" value="Expressed in testis and 6 other cell types or tissues"/>
</dbReference>
<dbReference type="GO" id="GO:0005737">
    <property type="term" value="C:cytoplasm"/>
    <property type="evidence" value="ECO:0000318"/>
    <property type="project" value="GO_Central"/>
</dbReference>
<dbReference type="GO" id="GO:0005509">
    <property type="term" value="F:calcium ion binding"/>
    <property type="evidence" value="ECO:0000318"/>
    <property type="project" value="GO_Central"/>
</dbReference>
<dbReference type="GO" id="GO:0030234">
    <property type="term" value="F:enzyme regulator activity"/>
    <property type="evidence" value="ECO:0000318"/>
    <property type="project" value="GO_Central"/>
</dbReference>
<dbReference type="GO" id="GO:0000226">
    <property type="term" value="P:microtubule cytoskeleton organization"/>
    <property type="evidence" value="ECO:0000318"/>
    <property type="project" value="GO_Central"/>
</dbReference>
<dbReference type="CDD" id="cd00051">
    <property type="entry name" value="EFh"/>
    <property type="match status" value="1"/>
</dbReference>
<dbReference type="FunFam" id="1.10.238.10:FF:000003">
    <property type="entry name" value="Calmodulin A"/>
    <property type="match status" value="1"/>
</dbReference>
<dbReference type="Gene3D" id="1.10.238.10">
    <property type="entry name" value="EF-hand"/>
    <property type="match status" value="1"/>
</dbReference>
<dbReference type="InterPro" id="IPR050145">
    <property type="entry name" value="Centrin_CML-like"/>
</dbReference>
<dbReference type="InterPro" id="IPR011992">
    <property type="entry name" value="EF-hand-dom_pair"/>
</dbReference>
<dbReference type="InterPro" id="IPR018247">
    <property type="entry name" value="EF_Hand_1_Ca_BS"/>
</dbReference>
<dbReference type="InterPro" id="IPR002048">
    <property type="entry name" value="EF_hand_dom"/>
</dbReference>
<dbReference type="PANTHER" id="PTHR23050">
    <property type="entry name" value="CALCIUM BINDING PROTEIN"/>
    <property type="match status" value="1"/>
</dbReference>
<dbReference type="Pfam" id="PF13499">
    <property type="entry name" value="EF-hand_7"/>
    <property type="match status" value="1"/>
</dbReference>
<dbReference type="Pfam" id="PF13833">
    <property type="entry name" value="EF-hand_8"/>
    <property type="match status" value="1"/>
</dbReference>
<dbReference type="SMART" id="SM00054">
    <property type="entry name" value="EFh"/>
    <property type="match status" value="3"/>
</dbReference>
<dbReference type="SUPFAM" id="SSF47473">
    <property type="entry name" value="EF-hand"/>
    <property type="match status" value="1"/>
</dbReference>
<dbReference type="PROSITE" id="PS00018">
    <property type="entry name" value="EF_HAND_1"/>
    <property type="match status" value="1"/>
</dbReference>
<dbReference type="PROSITE" id="PS50222">
    <property type="entry name" value="EF_HAND_2"/>
    <property type="match status" value="3"/>
</dbReference>
<proteinExistence type="evidence at transcript level"/>